<evidence type="ECO:0000250" key="1">
    <source>
        <dbReference type="UniProtKB" id="O13465"/>
    </source>
</evidence>
<evidence type="ECO:0000250" key="2">
    <source>
        <dbReference type="UniProtKB" id="P07374"/>
    </source>
</evidence>
<evidence type="ECO:0000250" key="3">
    <source>
        <dbReference type="UniProtKB" id="P41020"/>
    </source>
</evidence>
<evidence type="ECO:0000255" key="4">
    <source>
        <dbReference type="PROSITE-ProRule" id="PRU00700"/>
    </source>
</evidence>
<feature type="chain" id="PRO_0000067527" description="Urease">
    <location>
        <begin position="1"/>
        <end position="833"/>
    </location>
</feature>
<feature type="domain" description="Urease" evidence="4">
    <location>
        <begin position="395"/>
        <end position="833"/>
    </location>
</feature>
<feature type="active site" description="Proton donor" evidence="4">
    <location>
        <position position="586"/>
    </location>
</feature>
<feature type="binding site" evidence="4">
    <location>
        <position position="400"/>
    </location>
    <ligand>
        <name>Ni(2+)</name>
        <dbReference type="ChEBI" id="CHEBI:49786"/>
        <label>1</label>
    </ligand>
</feature>
<feature type="binding site" evidence="4">
    <location>
        <position position="402"/>
    </location>
    <ligand>
        <name>Ni(2+)</name>
        <dbReference type="ChEBI" id="CHEBI:49786"/>
        <label>1</label>
    </ligand>
</feature>
<feature type="binding site" evidence="3">
    <location>
        <position position="402"/>
    </location>
    <ligand>
        <name>urea</name>
        <dbReference type="ChEBI" id="CHEBI:16199"/>
    </ligand>
</feature>
<feature type="binding site" evidence="3">
    <location>
        <position position="433"/>
    </location>
    <ligand>
        <name>urea</name>
        <dbReference type="ChEBI" id="CHEBI:16199"/>
    </ligand>
</feature>
<feature type="binding site" description="via carbamate group" evidence="4">
    <location>
        <position position="483"/>
    </location>
    <ligand>
        <name>Ni(2+)</name>
        <dbReference type="ChEBI" id="CHEBI:49786"/>
        <label>1</label>
    </ligand>
</feature>
<feature type="binding site" description="via carbamate group" evidence="4">
    <location>
        <position position="483"/>
    </location>
    <ligand>
        <name>Ni(2+)</name>
        <dbReference type="ChEBI" id="CHEBI:49786"/>
        <label>2</label>
    </ligand>
</feature>
<feature type="binding site" evidence="4">
    <location>
        <position position="485"/>
    </location>
    <ligand>
        <name>urea</name>
        <dbReference type="ChEBI" id="CHEBI:16199"/>
    </ligand>
</feature>
<feature type="binding site" evidence="4">
    <location>
        <position position="512"/>
    </location>
    <ligand>
        <name>Ni(2+)</name>
        <dbReference type="ChEBI" id="CHEBI:49786"/>
        <label>2</label>
    </ligand>
</feature>
<feature type="binding site" evidence="3">
    <location>
        <position position="512"/>
    </location>
    <ligand>
        <name>urea</name>
        <dbReference type="ChEBI" id="CHEBI:16199"/>
    </ligand>
</feature>
<feature type="binding site" evidence="4">
    <location>
        <position position="538"/>
    </location>
    <ligand>
        <name>Ni(2+)</name>
        <dbReference type="ChEBI" id="CHEBI:49786"/>
        <label>2</label>
    </ligand>
</feature>
<feature type="binding site" evidence="4">
    <location>
        <position position="626"/>
    </location>
    <ligand>
        <name>Ni(2+)</name>
        <dbReference type="ChEBI" id="CHEBI:49786"/>
        <label>1</label>
    </ligand>
</feature>
<feature type="binding site" evidence="3">
    <location>
        <position position="629"/>
    </location>
    <ligand>
        <name>urea</name>
        <dbReference type="ChEBI" id="CHEBI:16199"/>
    </ligand>
</feature>
<feature type="modified residue" description="N6-carboxylysine" evidence="2">
    <location>
        <position position="483"/>
    </location>
</feature>
<comment type="function">
    <text evidence="1">Plays a nutritional role via nitrogen acquisition in the environment (By similarity). Contributes to the central nervous system invasion by enhancing yeast sequestration within microcapillary beds (such as within the brain) during hematogenous spread, thereby facilitating blood-to-brain invasion by C.neoformans (By similarity). Affects fitness within the mammalian phagosome, promoting non-lytic exocytosis while delaying intracellular replication and thus reducing phagolysosomal membrane damage, events that could facilitate cryptococcal dissemination when transported inside macrophages (By similarity). Urease activity is also associated with the regulation of key intracellular metabolic pathways, including melanin biosynthesis, polyamine biosynthesis, as well as intracellular levels of proline and reactive oxygen species (By similarity).</text>
</comment>
<comment type="catalytic activity">
    <reaction evidence="4">
        <text>urea + 2 H2O + H(+) = hydrogencarbonate + 2 NH4(+)</text>
        <dbReference type="Rhea" id="RHEA:20557"/>
        <dbReference type="ChEBI" id="CHEBI:15377"/>
        <dbReference type="ChEBI" id="CHEBI:15378"/>
        <dbReference type="ChEBI" id="CHEBI:16199"/>
        <dbReference type="ChEBI" id="CHEBI:17544"/>
        <dbReference type="ChEBI" id="CHEBI:28938"/>
        <dbReference type="EC" id="3.5.1.5"/>
    </reaction>
    <physiologicalReaction direction="left-to-right" evidence="1">
        <dbReference type="Rhea" id="RHEA:20558"/>
    </physiologicalReaction>
</comment>
<comment type="cofactor">
    <cofactor evidence="4">
        <name>Ni(2+)</name>
        <dbReference type="ChEBI" id="CHEBI:49786"/>
    </cofactor>
    <text evidence="4">Binds 2 Ni(2+) ions per subunit.</text>
</comment>
<comment type="activity regulation">
    <text evidence="1">The urease accessory proteins URE4, URE6 and URE7 are required for urease activity, URE7 supplying nickel for the functional urease.</text>
</comment>
<comment type="pathway">
    <text evidence="1">Nitrogen metabolism; urea degradation; CO(2) and NH(3) from urea (urease route): step 1/1.</text>
</comment>
<comment type="subunit">
    <text evidence="2">Homohexamer.</text>
</comment>
<comment type="PTM">
    <text evidence="2">Carboxylation allows a single lysine to coordinate two nickel ions.</text>
</comment>
<comment type="similarity">
    <text evidence="4">In the C-terminal section; belongs to the metallo-dependent hydrolases superfamily. Urease alpha subunit family.</text>
</comment>
<accession>P0CS22</accession>
<accession>Q55IZ5</accession>
<accession>Q5KCQ6</accession>
<organism>
    <name type="scientific">Cryptococcus neoformans var. neoformans serotype D (strain JEC21 / ATCC MYA-565)</name>
    <name type="common">Filobasidiella neoformans</name>
    <dbReference type="NCBI Taxonomy" id="214684"/>
    <lineage>
        <taxon>Eukaryota</taxon>
        <taxon>Fungi</taxon>
        <taxon>Dikarya</taxon>
        <taxon>Basidiomycota</taxon>
        <taxon>Agaricomycotina</taxon>
        <taxon>Tremellomycetes</taxon>
        <taxon>Tremellales</taxon>
        <taxon>Cryptococcaceae</taxon>
        <taxon>Cryptococcus</taxon>
        <taxon>Cryptococcus neoformans species complex</taxon>
    </lineage>
</organism>
<keyword id="KW-0378">Hydrolase</keyword>
<keyword id="KW-0479">Metal-binding</keyword>
<keyword id="KW-0533">Nickel</keyword>
<keyword id="KW-1185">Reference proteome</keyword>
<keyword id="KW-0843">Virulence</keyword>
<sequence length="833" mass="90455">MHLLPRETDKLIVTTLGTLAQRRLARGLILNRAETIALISSQLQEFIRDGRHSVAELMDLGKKMLGRRHVRKGVPESIHTIQVEGTFPDGVFLVTVDDPISSDDGDLNNAFYGSFLPIPSADVFPAAPEPADTLLGALICRKEPIKINASRRRFKLEVKNAGDRPIQVGSHYHFLETNPALIFDRLLSYGYHLDIPAGTAVRFEPGEKKTVTMVEFGGKKIFHGGSGLASGSFDENLRETKVKEMVEKGGFGHKDQEKVEEGPTTEMNREVYASMFGPTTGDKIKLADMDLWIEVEKDYTVYGEECKFGGGKVLRDGGGQASGRHEHEVLDLVITNALIVDWNGIYKADIGVKNGIIVGIGKAGNPDMMDGVTDGMIVGSSTEVIAGEKLIITAGALDVHVHYICPQLMTEALASGITTVVGGGTGPADGSNATTCTSSSFYMQNMIKATDTVPLNFGFTGKGNDSGTNALRDVIEAGACGLKVHEDWGATPEVIDRALSIADEYDVQVNLHSDTLNESGYVESTLAAIKGRTIHSYHTEGAGGGHAPDIIVVCEYENVLPSSTNPTRPYAVNTLDEHLDMLMVCHHLDKSIPEDIAFADSRIRSETVAAEDVLQDTGAISMISSDCQAMGRIGEVITRTWRTAAKMKQFRGPLEGDEPTRDNNRVKRYVAKYTINPAITHGMSHLIGQVAVGCLADLVFWTAESFGARPEMILKGGVIAWAAMGDANASIPTVQPVIGRPMWGSQPEAAALNSIVWVSQASLDKDLVKRFNIKKRAEAVKNCRAIGKKDMKWNDSMPKMTVDPETYDVHADGVLCDVPPADKLPLTKRYFVY</sequence>
<protein>
    <recommendedName>
        <fullName evidence="4">Urease</fullName>
        <ecNumber evidence="4">3.5.1.5</ecNumber>
    </recommendedName>
    <alternativeName>
        <fullName evidence="4">Urea amidohydrolase</fullName>
    </alternativeName>
</protein>
<reference key="1">
    <citation type="journal article" date="2005" name="Science">
        <title>The genome of the basidiomycetous yeast and human pathogen Cryptococcus neoformans.</title>
        <authorList>
            <person name="Loftus B.J."/>
            <person name="Fung E."/>
            <person name="Roncaglia P."/>
            <person name="Rowley D."/>
            <person name="Amedeo P."/>
            <person name="Bruno D."/>
            <person name="Vamathevan J."/>
            <person name="Miranda M."/>
            <person name="Anderson I.J."/>
            <person name="Fraser J.A."/>
            <person name="Allen J.E."/>
            <person name="Bosdet I.E."/>
            <person name="Brent M.R."/>
            <person name="Chiu R."/>
            <person name="Doering T.L."/>
            <person name="Donlin M.J."/>
            <person name="D'Souza C.A."/>
            <person name="Fox D.S."/>
            <person name="Grinberg V."/>
            <person name="Fu J."/>
            <person name="Fukushima M."/>
            <person name="Haas B.J."/>
            <person name="Huang J.C."/>
            <person name="Janbon G."/>
            <person name="Jones S.J.M."/>
            <person name="Koo H.L."/>
            <person name="Krzywinski M.I."/>
            <person name="Kwon-Chung K.J."/>
            <person name="Lengeler K.B."/>
            <person name="Maiti R."/>
            <person name="Marra M.A."/>
            <person name="Marra R.E."/>
            <person name="Mathewson C.A."/>
            <person name="Mitchell T.G."/>
            <person name="Pertea M."/>
            <person name="Riggs F.R."/>
            <person name="Salzberg S.L."/>
            <person name="Schein J.E."/>
            <person name="Shvartsbeyn A."/>
            <person name="Shin H."/>
            <person name="Shumway M."/>
            <person name="Specht C.A."/>
            <person name="Suh B.B."/>
            <person name="Tenney A."/>
            <person name="Utterback T.R."/>
            <person name="Wickes B.L."/>
            <person name="Wortman J.R."/>
            <person name="Wye N.H."/>
            <person name="Kronstad J.W."/>
            <person name="Lodge J.K."/>
            <person name="Heitman J."/>
            <person name="Davis R.W."/>
            <person name="Fraser C.M."/>
            <person name="Hyman R.W."/>
        </authorList>
    </citation>
    <scope>NUCLEOTIDE SEQUENCE [LARGE SCALE GENOMIC DNA]</scope>
    <source>
        <strain>JEC21 / ATCC MYA-565</strain>
    </source>
</reference>
<dbReference type="EC" id="3.5.1.5" evidence="4"/>
<dbReference type="EMBL" id="AE017348">
    <property type="protein sequence ID" value="AAW45058.1"/>
    <property type="molecule type" value="Genomic_DNA"/>
</dbReference>
<dbReference type="RefSeq" id="XP_572365.1">
    <property type="nucleotide sequence ID" value="XM_572365.2"/>
</dbReference>
<dbReference type="SMR" id="P0CS22"/>
<dbReference type="FunCoup" id="P0CS22">
    <property type="interactions" value="63"/>
</dbReference>
<dbReference type="STRING" id="214684.P0CS22"/>
<dbReference type="MEROPS" id="M38.982"/>
<dbReference type="PaxDb" id="214684-P0CS22"/>
<dbReference type="EnsemblFungi" id="AAW45058">
    <property type="protein sequence ID" value="AAW45058"/>
    <property type="gene ID" value="CNH01900"/>
</dbReference>
<dbReference type="GeneID" id="3259018"/>
<dbReference type="KEGG" id="cne:CNH01900"/>
<dbReference type="VEuPathDB" id="FungiDB:CNH01900"/>
<dbReference type="eggNOG" id="ENOG502QPKB">
    <property type="taxonomic scope" value="Eukaryota"/>
</dbReference>
<dbReference type="HOGENOM" id="CLU_000980_0_0_1"/>
<dbReference type="InParanoid" id="P0CS22"/>
<dbReference type="OMA" id="DTMDGVH"/>
<dbReference type="OrthoDB" id="1708534at2759"/>
<dbReference type="UniPathway" id="UPA00258">
    <property type="reaction ID" value="UER00370"/>
</dbReference>
<dbReference type="Proteomes" id="UP000002149">
    <property type="component" value="Chromosome 8"/>
</dbReference>
<dbReference type="GO" id="GO:0035550">
    <property type="term" value="C:urease complex"/>
    <property type="evidence" value="ECO:0007669"/>
    <property type="project" value="InterPro"/>
</dbReference>
<dbReference type="GO" id="GO:0016151">
    <property type="term" value="F:nickel cation binding"/>
    <property type="evidence" value="ECO:0007669"/>
    <property type="project" value="InterPro"/>
</dbReference>
<dbReference type="GO" id="GO:0009039">
    <property type="term" value="F:urease activity"/>
    <property type="evidence" value="ECO:0000318"/>
    <property type="project" value="GO_Central"/>
</dbReference>
<dbReference type="GO" id="GO:0043419">
    <property type="term" value="P:urea catabolic process"/>
    <property type="evidence" value="ECO:0000318"/>
    <property type="project" value="GO_Central"/>
</dbReference>
<dbReference type="CDD" id="cd00375">
    <property type="entry name" value="Urease_alpha"/>
    <property type="match status" value="1"/>
</dbReference>
<dbReference type="CDD" id="cd00407">
    <property type="entry name" value="Urease_beta"/>
    <property type="match status" value="1"/>
</dbReference>
<dbReference type="CDD" id="cd00390">
    <property type="entry name" value="Urease_gamma"/>
    <property type="match status" value="1"/>
</dbReference>
<dbReference type="FunFam" id="3.30.280.10:FF:000001">
    <property type="entry name" value="Urease subunit alpha"/>
    <property type="match status" value="1"/>
</dbReference>
<dbReference type="Gene3D" id="3.20.20.140">
    <property type="entry name" value="Metal-dependent hydrolases"/>
    <property type="match status" value="1"/>
</dbReference>
<dbReference type="Gene3D" id="2.10.150.10">
    <property type="entry name" value="Urease, beta subunit"/>
    <property type="match status" value="1"/>
</dbReference>
<dbReference type="Gene3D" id="3.30.280.10">
    <property type="entry name" value="Urease, gamma-like subunit"/>
    <property type="match status" value="1"/>
</dbReference>
<dbReference type="Gene3D" id="2.30.40.10">
    <property type="entry name" value="Urease, subunit C, domain 1"/>
    <property type="match status" value="1"/>
</dbReference>
<dbReference type="HAMAP" id="MF_01953">
    <property type="entry name" value="Urease_alpha"/>
    <property type="match status" value="1"/>
</dbReference>
<dbReference type="InterPro" id="IPR006680">
    <property type="entry name" value="Amidohydro-rel"/>
</dbReference>
<dbReference type="InterPro" id="IPR011059">
    <property type="entry name" value="Metal-dep_hydrolase_composite"/>
</dbReference>
<dbReference type="InterPro" id="IPR032466">
    <property type="entry name" value="Metal_Hydrolase"/>
</dbReference>
<dbReference type="InterPro" id="IPR008221">
    <property type="entry name" value="Urease"/>
</dbReference>
<dbReference type="InterPro" id="IPR011612">
    <property type="entry name" value="Urease_alpha_N_dom"/>
</dbReference>
<dbReference type="InterPro" id="IPR017950">
    <property type="entry name" value="Urease_AS"/>
</dbReference>
<dbReference type="InterPro" id="IPR005848">
    <property type="entry name" value="Urease_asu"/>
</dbReference>
<dbReference type="InterPro" id="IPR017951">
    <property type="entry name" value="Urease_asu_c"/>
</dbReference>
<dbReference type="InterPro" id="IPR002019">
    <property type="entry name" value="Urease_beta-like"/>
</dbReference>
<dbReference type="InterPro" id="IPR036461">
    <property type="entry name" value="Urease_betasu_sf"/>
</dbReference>
<dbReference type="InterPro" id="IPR002026">
    <property type="entry name" value="Urease_gamma/gamma-beta_su"/>
</dbReference>
<dbReference type="InterPro" id="IPR036463">
    <property type="entry name" value="Urease_gamma_sf"/>
</dbReference>
<dbReference type="InterPro" id="IPR029754">
    <property type="entry name" value="Urease_Ni-bd"/>
</dbReference>
<dbReference type="InterPro" id="IPR050069">
    <property type="entry name" value="Urease_subunit"/>
</dbReference>
<dbReference type="NCBIfam" id="NF009671">
    <property type="entry name" value="PRK13192.1"/>
    <property type="match status" value="1"/>
</dbReference>
<dbReference type="NCBIfam" id="NF009686">
    <property type="entry name" value="PRK13207.1"/>
    <property type="match status" value="1"/>
</dbReference>
<dbReference type="NCBIfam" id="TIGR01792">
    <property type="entry name" value="urease_alph"/>
    <property type="match status" value="1"/>
</dbReference>
<dbReference type="NCBIfam" id="TIGR00192">
    <property type="entry name" value="urease_beta"/>
    <property type="match status" value="1"/>
</dbReference>
<dbReference type="NCBIfam" id="TIGR00193">
    <property type="entry name" value="urease_gam"/>
    <property type="match status" value="1"/>
</dbReference>
<dbReference type="PANTHER" id="PTHR33569">
    <property type="entry name" value="UREASE"/>
    <property type="match status" value="1"/>
</dbReference>
<dbReference type="PANTHER" id="PTHR33569:SF1">
    <property type="entry name" value="UREASE"/>
    <property type="match status" value="1"/>
</dbReference>
<dbReference type="Pfam" id="PF01979">
    <property type="entry name" value="Amidohydro_1"/>
    <property type="match status" value="1"/>
</dbReference>
<dbReference type="Pfam" id="PF00449">
    <property type="entry name" value="Urease_alpha"/>
    <property type="match status" value="1"/>
</dbReference>
<dbReference type="Pfam" id="PF00699">
    <property type="entry name" value="Urease_beta"/>
    <property type="match status" value="1"/>
</dbReference>
<dbReference type="Pfam" id="PF00547">
    <property type="entry name" value="Urease_gamma"/>
    <property type="match status" value="1"/>
</dbReference>
<dbReference type="PIRSF" id="PIRSF001222">
    <property type="entry name" value="Urease"/>
    <property type="match status" value="1"/>
</dbReference>
<dbReference type="PRINTS" id="PR01752">
    <property type="entry name" value="UREASE"/>
</dbReference>
<dbReference type="SUPFAM" id="SSF51338">
    <property type="entry name" value="Composite domain of metallo-dependent hydrolases"/>
    <property type="match status" value="2"/>
</dbReference>
<dbReference type="SUPFAM" id="SSF51556">
    <property type="entry name" value="Metallo-dependent hydrolases"/>
    <property type="match status" value="1"/>
</dbReference>
<dbReference type="SUPFAM" id="SSF51278">
    <property type="entry name" value="Urease, beta-subunit"/>
    <property type="match status" value="1"/>
</dbReference>
<dbReference type="SUPFAM" id="SSF54111">
    <property type="entry name" value="Urease, gamma-subunit"/>
    <property type="match status" value="1"/>
</dbReference>
<dbReference type="PROSITE" id="PS01120">
    <property type="entry name" value="UREASE_1"/>
    <property type="match status" value="1"/>
</dbReference>
<dbReference type="PROSITE" id="PS00145">
    <property type="entry name" value="UREASE_2"/>
    <property type="match status" value="1"/>
</dbReference>
<dbReference type="PROSITE" id="PS51368">
    <property type="entry name" value="UREASE_3"/>
    <property type="match status" value="1"/>
</dbReference>
<gene>
    <name type="ordered locus">CNH01900</name>
</gene>
<name>UREA_CRYNJ</name>
<proteinExistence type="inferred from homology"/>